<sequence>MAQILAPSIQCQTRITKTSPLATPISSKMWSSLVMKQNKKVARSAKFRVMAINSGTINRVEDLLNLDITPFTDSIIAEYIWIGGTGIDVRSKSRTISKPVEHPSELPKWNYDGSSTGQAPGEDSEVILYPQAIFKDPFRGGNNILVICDAYTPQGEPIPTNKRHKAAEIFSNPKVEAEIPWYGIEQEYTLLQTDVKWPLGWPVGGYPGPQGPYYCAAGADKSFGRDISDAHYKACLYAGINISGTNGEVMPGQWEYQVGPSVGIEAGDHIWASRYILERITEQAGVVLTLDPKPIEGDWNGAGCHTNYSTKSMREDGGFEVIKKAILNLSLRHKVHIEAYGEGNERRLTGKHETASINTFSWGVANRGCSIRVGRDTEKNGKGYLEDRRPASNMDPYVVTALLAESTLLWEPTLEAEALAAQKIALKV</sequence>
<name>GLNA2_MEDSA</name>
<organism>
    <name type="scientific">Medicago sativa</name>
    <name type="common">Alfalfa</name>
    <dbReference type="NCBI Taxonomy" id="3879"/>
    <lineage>
        <taxon>Eukaryota</taxon>
        <taxon>Viridiplantae</taxon>
        <taxon>Streptophyta</taxon>
        <taxon>Embryophyta</taxon>
        <taxon>Tracheophyta</taxon>
        <taxon>Spermatophyta</taxon>
        <taxon>Magnoliopsida</taxon>
        <taxon>eudicotyledons</taxon>
        <taxon>Gunneridae</taxon>
        <taxon>Pentapetalae</taxon>
        <taxon>rosids</taxon>
        <taxon>fabids</taxon>
        <taxon>Fabales</taxon>
        <taxon>Fabaceae</taxon>
        <taxon>Papilionoideae</taxon>
        <taxon>50 kb inversion clade</taxon>
        <taxon>NPAAA clade</taxon>
        <taxon>Hologalegina</taxon>
        <taxon>IRL clade</taxon>
        <taxon>Trifolieae</taxon>
        <taxon>Medicago</taxon>
    </lineage>
</organism>
<dbReference type="EC" id="6.3.1.2"/>
<dbReference type="EMBL" id="AF124244">
    <property type="protein sequence ID" value="AAD28443.1"/>
    <property type="molecule type" value="mRNA"/>
</dbReference>
<dbReference type="SMR" id="Q9XQ94"/>
<dbReference type="GO" id="GO:0009507">
    <property type="term" value="C:chloroplast"/>
    <property type="evidence" value="ECO:0007669"/>
    <property type="project" value="UniProtKB-SubCell"/>
</dbReference>
<dbReference type="GO" id="GO:0005524">
    <property type="term" value="F:ATP binding"/>
    <property type="evidence" value="ECO:0007669"/>
    <property type="project" value="UniProtKB-KW"/>
</dbReference>
<dbReference type="GO" id="GO:0004356">
    <property type="term" value="F:glutamine synthetase activity"/>
    <property type="evidence" value="ECO:0007669"/>
    <property type="project" value="UniProtKB-EC"/>
</dbReference>
<dbReference type="GO" id="GO:0006542">
    <property type="term" value="P:glutamine biosynthetic process"/>
    <property type="evidence" value="ECO:0007669"/>
    <property type="project" value="InterPro"/>
</dbReference>
<dbReference type="FunFam" id="3.30.590.10:FF:000004">
    <property type="entry name" value="Glutamine synthetase"/>
    <property type="match status" value="1"/>
</dbReference>
<dbReference type="FunFam" id="3.10.20.70:FF:000003">
    <property type="entry name" value="Glutamine synthetase, chloroplastic"/>
    <property type="match status" value="1"/>
</dbReference>
<dbReference type="Gene3D" id="3.10.20.70">
    <property type="entry name" value="Glutamine synthetase, N-terminal domain"/>
    <property type="match status" value="1"/>
</dbReference>
<dbReference type="Gene3D" id="3.30.590.10">
    <property type="entry name" value="Glutamine synthetase/guanido kinase, catalytic domain"/>
    <property type="match status" value="1"/>
</dbReference>
<dbReference type="InterPro" id="IPR008147">
    <property type="entry name" value="Gln_synt_N"/>
</dbReference>
<dbReference type="InterPro" id="IPR036651">
    <property type="entry name" value="Gln_synt_N_sf"/>
</dbReference>
<dbReference type="InterPro" id="IPR014746">
    <property type="entry name" value="Gln_synth/guanido_kin_cat_dom"/>
</dbReference>
<dbReference type="InterPro" id="IPR008146">
    <property type="entry name" value="Gln_synth_cat_dom"/>
</dbReference>
<dbReference type="InterPro" id="IPR027303">
    <property type="entry name" value="Gln_synth_gly_rich_site"/>
</dbReference>
<dbReference type="InterPro" id="IPR027302">
    <property type="entry name" value="Gln_synth_N_conserv_site"/>
</dbReference>
<dbReference type="InterPro" id="IPR050292">
    <property type="entry name" value="Glutamine_Synthetase"/>
</dbReference>
<dbReference type="PANTHER" id="PTHR20852">
    <property type="entry name" value="GLUTAMINE SYNTHETASE"/>
    <property type="match status" value="1"/>
</dbReference>
<dbReference type="PANTHER" id="PTHR20852:SF118">
    <property type="entry name" value="GLUTAMINE SYNTHETASE, CHLOROPLASTIC_MITOCHONDRIAL"/>
    <property type="match status" value="1"/>
</dbReference>
<dbReference type="Pfam" id="PF00120">
    <property type="entry name" value="Gln-synt_C"/>
    <property type="match status" value="1"/>
</dbReference>
<dbReference type="Pfam" id="PF03951">
    <property type="entry name" value="Gln-synt_N"/>
    <property type="match status" value="1"/>
</dbReference>
<dbReference type="SMART" id="SM01230">
    <property type="entry name" value="Gln-synt_C"/>
    <property type="match status" value="1"/>
</dbReference>
<dbReference type="SUPFAM" id="SSF54368">
    <property type="entry name" value="Glutamine synthetase, N-terminal domain"/>
    <property type="match status" value="1"/>
</dbReference>
<dbReference type="SUPFAM" id="SSF55931">
    <property type="entry name" value="Glutamine synthetase/guanido kinase"/>
    <property type="match status" value="1"/>
</dbReference>
<dbReference type="PROSITE" id="PS00180">
    <property type="entry name" value="GLNA_1"/>
    <property type="match status" value="1"/>
</dbReference>
<dbReference type="PROSITE" id="PS00181">
    <property type="entry name" value="GLNA_ATP"/>
    <property type="match status" value="1"/>
</dbReference>
<dbReference type="PROSITE" id="PS51986">
    <property type="entry name" value="GS_BETA_GRASP"/>
    <property type="match status" value="1"/>
</dbReference>
<dbReference type="PROSITE" id="PS51987">
    <property type="entry name" value="GS_CATALYTIC"/>
    <property type="match status" value="1"/>
</dbReference>
<protein>
    <recommendedName>
        <fullName>Glutamine synthetase leaf isozyme, chloroplastic</fullName>
        <ecNumber>6.3.1.2</ecNumber>
    </recommendedName>
    <alternativeName>
        <fullName>GS2</fullName>
    </alternativeName>
    <alternativeName>
        <fullName>Glutamate--ammonia ligase</fullName>
    </alternativeName>
</protein>
<comment type="function">
    <text evidence="1">The light-modulated chloroplast enzyme, encoded by a nuclear gene and expressed primarily in leaves, is responsible for the reassimilation of the ammonia generated by photorespiration.</text>
</comment>
<comment type="catalytic activity">
    <reaction>
        <text>L-glutamate + NH4(+) + ATP = L-glutamine + ADP + phosphate + H(+)</text>
        <dbReference type="Rhea" id="RHEA:16169"/>
        <dbReference type="ChEBI" id="CHEBI:15378"/>
        <dbReference type="ChEBI" id="CHEBI:28938"/>
        <dbReference type="ChEBI" id="CHEBI:29985"/>
        <dbReference type="ChEBI" id="CHEBI:30616"/>
        <dbReference type="ChEBI" id="CHEBI:43474"/>
        <dbReference type="ChEBI" id="CHEBI:58359"/>
        <dbReference type="ChEBI" id="CHEBI:456216"/>
        <dbReference type="EC" id="6.3.1.2"/>
    </reaction>
</comment>
<comment type="subunit">
    <text evidence="1">Homooctamer.</text>
</comment>
<comment type="subcellular location">
    <subcellularLocation>
        <location>Plastid</location>
        <location>Chloroplast</location>
    </subcellularLocation>
</comment>
<comment type="miscellaneous">
    <text evidence="1">Irreversibly inhibited by the herbicide L-phosphinothricin (PPT).</text>
</comment>
<comment type="similarity">
    <text evidence="4">Belongs to the glutamine synthetase family.</text>
</comment>
<keyword id="KW-0067">ATP-binding</keyword>
<keyword id="KW-0150">Chloroplast</keyword>
<keyword id="KW-0436">Ligase</keyword>
<keyword id="KW-0535">Nitrogen fixation</keyword>
<keyword id="KW-0547">Nucleotide-binding</keyword>
<keyword id="KW-0934">Plastid</keyword>
<keyword id="KW-0809">Transit peptide</keyword>
<reference key="1">
    <citation type="online journal article" date="1999" name="Plant Gene Register">
        <title>Glutamine synthetase gene isolation from an alfalfa leaf cDNA library.</title>
        <authorList>
            <person name="Zozaya-Garza M."/>
            <person name="Sengupta-Gopalan C."/>
        </authorList>
        <locator>PGR99-054</locator>
    </citation>
    <scope>NUCLEOTIDE SEQUENCE [MRNA]</scope>
    <source>
        <strain>cv. Saranac</strain>
        <tissue>Leaf</tissue>
    </source>
</reference>
<gene>
    <name type="primary">GS2</name>
    <name type="synonym">GLN</name>
</gene>
<proteinExistence type="evidence at transcript level"/>
<feature type="transit peptide" description="Chloroplast" evidence="1">
    <location>
        <begin position="1"/>
        <end position="49"/>
    </location>
</feature>
<feature type="chain" id="PRO_0000011180" description="Glutamine synthetase leaf isozyme, chloroplastic">
    <location>
        <begin position="50"/>
        <end position="428"/>
    </location>
</feature>
<feature type="domain" description="GS beta-grasp" evidence="2">
    <location>
        <begin position="75"/>
        <end position="155"/>
    </location>
</feature>
<feature type="domain" description="GS catalytic" evidence="3">
    <location>
        <begin position="159"/>
        <end position="428"/>
    </location>
</feature>
<evidence type="ECO:0000250" key="1"/>
<evidence type="ECO:0000255" key="2">
    <source>
        <dbReference type="PROSITE-ProRule" id="PRU01330"/>
    </source>
</evidence>
<evidence type="ECO:0000255" key="3">
    <source>
        <dbReference type="PROSITE-ProRule" id="PRU01331"/>
    </source>
</evidence>
<evidence type="ECO:0000305" key="4"/>
<accession>Q9XQ94</accession>